<gene>
    <name type="primary">spf27</name>
    <name type="synonym">bcas2</name>
    <name type="ORF">DDB_G0282763</name>
</gene>
<comment type="function">
    <text evidence="1">Required for pre-mRNA splicing as component of the activated spliceosome.</text>
</comment>
<comment type="subunit">
    <text evidence="1">Component of the pre-catalytic and catalytic spliceosome complexes. Component of the postcatalytic spliceosome P complex.</text>
</comment>
<comment type="subcellular location">
    <subcellularLocation>
        <location evidence="1">Nucleus</location>
    </subcellularLocation>
</comment>
<comment type="similarity">
    <text evidence="3">Belongs to the SPF27 family.</text>
</comment>
<reference key="1">
    <citation type="journal article" date="2005" name="Nature">
        <title>The genome of the social amoeba Dictyostelium discoideum.</title>
        <authorList>
            <person name="Eichinger L."/>
            <person name="Pachebat J.A."/>
            <person name="Gloeckner G."/>
            <person name="Rajandream M.A."/>
            <person name="Sucgang R."/>
            <person name="Berriman M."/>
            <person name="Song J."/>
            <person name="Olsen R."/>
            <person name="Szafranski K."/>
            <person name="Xu Q."/>
            <person name="Tunggal B."/>
            <person name="Kummerfeld S."/>
            <person name="Madera M."/>
            <person name="Konfortov B.A."/>
            <person name="Rivero F."/>
            <person name="Bankier A.T."/>
            <person name="Lehmann R."/>
            <person name="Hamlin N."/>
            <person name="Davies R."/>
            <person name="Gaudet P."/>
            <person name="Fey P."/>
            <person name="Pilcher K."/>
            <person name="Chen G."/>
            <person name="Saunders D."/>
            <person name="Sodergren E.J."/>
            <person name="Davis P."/>
            <person name="Kerhornou A."/>
            <person name="Nie X."/>
            <person name="Hall N."/>
            <person name="Anjard C."/>
            <person name="Hemphill L."/>
            <person name="Bason N."/>
            <person name="Farbrother P."/>
            <person name="Desany B."/>
            <person name="Just E."/>
            <person name="Morio T."/>
            <person name="Rost R."/>
            <person name="Churcher C.M."/>
            <person name="Cooper J."/>
            <person name="Haydock S."/>
            <person name="van Driessche N."/>
            <person name="Cronin A."/>
            <person name="Goodhead I."/>
            <person name="Muzny D.M."/>
            <person name="Mourier T."/>
            <person name="Pain A."/>
            <person name="Lu M."/>
            <person name="Harper D."/>
            <person name="Lindsay R."/>
            <person name="Hauser H."/>
            <person name="James K.D."/>
            <person name="Quiles M."/>
            <person name="Madan Babu M."/>
            <person name="Saito T."/>
            <person name="Buchrieser C."/>
            <person name="Wardroper A."/>
            <person name="Felder M."/>
            <person name="Thangavelu M."/>
            <person name="Johnson D."/>
            <person name="Knights A."/>
            <person name="Loulseged H."/>
            <person name="Mungall K.L."/>
            <person name="Oliver K."/>
            <person name="Price C."/>
            <person name="Quail M.A."/>
            <person name="Urushihara H."/>
            <person name="Hernandez J."/>
            <person name="Rabbinowitsch E."/>
            <person name="Steffen D."/>
            <person name="Sanders M."/>
            <person name="Ma J."/>
            <person name="Kohara Y."/>
            <person name="Sharp S."/>
            <person name="Simmonds M.N."/>
            <person name="Spiegler S."/>
            <person name="Tivey A."/>
            <person name="Sugano S."/>
            <person name="White B."/>
            <person name="Walker D."/>
            <person name="Woodward J.R."/>
            <person name="Winckler T."/>
            <person name="Tanaka Y."/>
            <person name="Shaulsky G."/>
            <person name="Schleicher M."/>
            <person name="Weinstock G.M."/>
            <person name="Rosenthal A."/>
            <person name="Cox E.C."/>
            <person name="Chisholm R.L."/>
            <person name="Gibbs R.A."/>
            <person name="Loomis W.F."/>
            <person name="Platzer M."/>
            <person name="Kay R.R."/>
            <person name="Williams J.G."/>
            <person name="Dear P.H."/>
            <person name="Noegel A.A."/>
            <person name="Barrell B.G."/>
            <person name="Kuspa A."/>
        </authorList>
    </citation>
    <scope>NUCLEOTIDE SEQUENCE [LARGE SCALE GENOMIC DNA]</scope>
    <source>
        <strain>AX4</strain>
    </source>
</reference>
<accession>Q54SG7</accession>
<name>SPF27_DICDI</name>
<evidence type="ECO:0000250" key="1">
    <source>
        <dbReference type="UniProtKB" id="O75934"/>
    </source>
</evidence>
<evidence type="ECO:0000255" key="2"/>
<evidence type="ECO:0000305" key="3"/>
<feature type="chain" id="PRO_0000331259" description="Pre-mRNA-splicing factor spf27">
    <location>
        <begin position="1"/>
        <end position="226"/>
    </location>
</feature>
<feature type="coiled-coil region" evidence="2">
    <location>
        <begin position="58"/>
        <end position="222"/>
    </location>
</feature>
<proteinExistence type="inferred from homology"/>
<sequence length="226" mass="26979">MNIIIEGAENIDSLPYVDDSVNENEQELINKLISDEMSTFTPPDYLAQLPSFIDIDYNNFQFLENDFKRMEKEEKMKEFDIGRYKVEPTTTMIKQQLNEKQWNDSLNNARSQLEHQDIRKINLELLQRYGGNSWKLYLSDLEILQKTLKKQLDQKKQQIEEINIQRKLSQEQTFEKIQQHDKKFLELVYKNTEIESACKSIELEIEQLKLKQQLQQQQENGDLNNK</sequence>
<organism>
    <name type="scientific">Dictyostelium discoideum</name>
    <name type="common">Social amoeba</name>
    <dbReference type="NCBI Taxonomy" id="44689"/>
    <lineage>
        <taxon>Eukaryota</taxon>
        <taxon>Amoebozoa</taxon>
        <taxon>Evosea</taxon>
        <taxon>Eumycetozoa</taxon>
        <taxon>Dictyostelia</taxon>
        <taxon>Dictyosteliales</taxon>
        <taxon>Dictyosteliaceae</taxon>
        <taxon>Dictyostelium</taxon>
    </lineage>
</organism>
<dbReference type="EMBL" id="AAFI02000047">
    <property type="protein sequence ID" value="EAL66241.2"/>
    <property type="molecule type" value="Genomic_DNA"/>
</dbReference>
<dbReference type="RefSeq" id="XP_640072.2">
    <property type="nucleotide sequence ID" value="XM_634980.2"/>
</dbReference>
<dbReference type="SMR" id="Q54SG7"/>
<dbReference type="FunCoup" id="Q54SG7">
    <property type="interactions" value="781"/>
</dbReference>
<dbReference type="STRING" id="44689.Q54SG7"/>
<dbReference type="PaxDb" id="44689-DDB0233748"/>
<dbReference type="EnsemblProtists" id="EAL66241">
    <property type="protein sequence ID" value="EAL66241"/>
    <property type="gene ID" value="DDB_G0282763"/>
</dbReference>
<dbReference type="GeneID" id="8623601"/>
<dbReference type="KEGG" id="ddi:DDB_G0282763"/>
<dbReference type="dictyBase" id="DDB_G0282763">
    <property type="gene designation" value="spf27"/>
</dbReference>
<dbReference type="VEuPathDB" id="AmoebaDB:DDB_G0282763"/>
<dbReference type="eggNOG" id="KOG3096">
    <property type="taxonomic scope" value="Eukaryota"/>
</dbReference>
<dbReference type="HOGENOM" id="CLU_082523_2_1_1"/>
<dbReference type="InParanoid" id="Q54SG7"/>
<dbReference type="OMA" id="SAWQESI"/>
<dbReference type="PhylomeDB" id="Q54SG7"/>
<dbReference type="Reactome" id="R-DDI-72163">
    <property type="pathway name" value="mRNA Splicing - Major Pathway"/>
</dbReference>
<dbReference type="PRO" id="PR:Q54SG7"/>
<dbReference type="Proteomes" id="UP000002195">
    <property type="component" value="Chromosome 3"/>
</dbReference>
<dbReference type="GO" id="GO:0071013">
    <property type="term" value="C:catalytic step 2 spliceosome"/>
    <property type="evidence" value="ECO:0000318"/>
    <property type="project" value="GO_Central"/>
</dbReference>
<dbReference type="GO" id="GO:0000974">
    <property type="term" value="C:Prp19 complex"/>
    <property type="evidence" value="ECO:0000318"/>
    <property type="project" value="GO_Central"/>
</dbReference>
<dbReference type="GO" id="GO:0005681">
    <property type="term" value="C:spliceosomal complex"/>
    <property type="evidence" value="ECO:0000250"/>
    <property type="project" value="dictyBase"/>
</dbReference>
<dbReference type="GO" id="GO:0006397">
    <property type="term" value="P:mRNA processing"/>
    <property type="evidence" value="ECO:0007669"/>
    <property type="project" value="UniProtKB-KW"/>
</dbReference>
<dbReference type="GO" id="GO:0008380">
    <property type="term" value="P:RNA splicing"/>
    <property type="evidence" value="ECO:0007669"/>
    <property type="project" value="UniProtKB-KW"/>
</dbReference>
<dbReference type="InterPro" id="IPR008409">
    <property type="entry name" value="SPF27"/>
</dbReference>
<dbReference type="PANTHER" id="PTHR13296">
    <property type="entry name" value="BCAS2 PROTEIN"/>
    <property type="match status" value="1"/>
</dbReference>
<dbReference type="PANTHER" id="PTHR13296:SF0">
    <property type="entry name" value="PRE-MRNA-SPLICING FACTOR SPF27"/>
    <property type="match status" value="1"/>
</dbReference>
<dbReference type="Pfam" id="PF05700">
    <property type="entry name" value="BCAS2"/>
    <property type="match status" value="1"/>
</dbReference>
<keyword id="KW-0175">Coiled coil</keyword>
<keyword id="KW-0507">mRNA processing</keyword>
<keyword id="KW-0508">mRNA splicing</keyword>
<keyword id="KW-0539">Nucleus</keyword>
<keyword id="KW-1185">Reference proteome</keyword>
<keyword id="KW-0747">Spliceosome</keyword>
<protein>
    <recommendedName>
        <fullName>Pre-mRNA-splicing factor spf27</fullName>
    </recommendedName>
</protein>